<name>RS7_OPITP</name>
<gene>
    <name evidence="1" type="primary">rpsG</name>
    <name type="ordered locus">Oter_0229</name>
</gene>
<reference key="1">
    <citation type="journal article" date="2011" name="J. Bacteriol.">
        <title>Genome sequence of the verrucomicrobium Opitutus terrae PB90-1, an abundant inhabitant of rice paddy soil ecosystems.</title>
        <authorList>
            <person name="van Passel M.W."/>
            <person name="Kant R."/>
            <person name="Palva A."/>
            <person name="Copeland A."/>
            <person name="Lucas S."/>
            <person name="Lapidus A."/>
            <person name="Glavina del Rio T."/>
            <person name="Pitluck S."/>
            <person name="Goltsman E."/>
            <person name="Clum A."/>
            <person name="Sun H."/>
            <person name="Schmutz J."/>
            <person name="Larimer F.W."/>
            <person name="Land M.L."/>
            <person name="Hauser L."/>
            <person name="Kyrpides N."/>
            <person name="Mikhailova N."/>
            <person name="Richardson P.P."/>
            <person name="Janssen P.H."/>
            <person name="de Vos W.M."/>
            <person name="Smidt H."/>
        </authorList>
    </citation>
    <scope>NUCLEOTIDE SEQUENCE [LARGE SCALE GENOMIC DNA]</scope>
    <source>
        <strain>DSM 11246 / JCM 15787 / PB90-1</strain>
    </source>
</reference>
<sequence>MSRRHRAVKRQVEPDIRYKSPLVAHLVNVIMKSGKKNLAQRIVYGAFEKVSEKLEKGDPVDLLLGALENARPRLEVKSRRVGGATYQVPIEISFERQESLALRWIVDAASGRKGIPMKEALAAEIIDAYNNTGNVVKKKEDTHKMAQANRAFAHLRW</sequence>
<protein>
    <recommendedName>
        <fullName evidence="1">Small ribosomal subunit protein uS7</fullName>
    </recommendedName>
    <alternativeName>
        <fullName evidence="2">30S ribosomal protein S7</fullName>
    </alternativeName>
</protein>
<comment type="function">
    <text evidence="1">One of the primary rRNA binding proteins, it binds directly to 16S rRNA where it nucleates assembly of the head domain of the 30S subunit. Is located at the subunit interface close to the decoding center, probably blocks exit of the E-site tRNA.</text>
</comment>
<comment type="subunit">
    <text evidence="1">Part of the 30S ribosomal subunit. Contacts proteins S9 and S11.</text>
</comment>
<comment type="similarity">
    <text evidence="1">Belongs to the universal ribosomal protein uS7 family.</text>
</comment>
<accession>B1ZNF1</accession>
<dbReference type="EMBL" id="CP001032">
    <property type="protein sequence ID" value="ACB73520.1"/>
    <property type="molecule type" value="Genomic_DNA"/>
</dbReference>
<dbReference type="RefSeq" id="WP_012373058.1">
    <property type="nucleotide sequence ID" value="NC_010571.1"/>
</dbReference>
<dbReference type="SMR" id="B1ZNF1"/>
<dbReference type="STRING" id="452637.Oter_0229"/>
<dbReference type="KEGG" id="ote:Oter_0229"/>
<dbReference type="eggNOG" id="COG0049">
    <property type="taxonomic scope" value="Bacteria"/>
</dbReference>
<dbReference type="HOGENOM" id="CLU_072226_1_1_0"/>
<dbReference type="OrthoDB" id="9807653at2"/>
<dbReference type="Proteomes" id="UP000007013">
    <property type="component" value="Chromosome"/>
</dbReference>
<dbReference type="GO" id="GO:0015935">
    <property type="term" value="C:small ribosomal subunit"/>
    <property type="evidence" value="ECO:0007669"/>
    <property type="project" value="InterPro"/>
</dbReference>
<dbReference type="GO" id="GO:0019843">
    <property type="term" value="F:rRNA binding"/>
    <property type="evidence" value="ECO:0007669"/>
    <property type="project" value="UniProtKB-UniRule"/>
</dbReference>
<dbReference type="GO" id="GO:0003735">
    <property type="term" value="F:structural constituent of ribosome"/>
    <property type="evidence" value="ECO:0007669"/>
    <property type="project" value="InterPro"/>
</dbReference>
<dbReference type="GO" id="GO:0000049">
    <property type="term" value="F:tRNA binding"/>
    <property type="evidence" value="ECO:0007669"/>
    <property type="project" value="UniProtKB-UniRule"/>
</dbReference>
<dbReference type="GO" id="GO:0006412">
    <property type="term" value="P:translation"/>
    <property type="evidence" value="ECO:0007669"/>
    <property type="project" value="UniProtKB-UniRule"/>
</dbReference>
<dbReference type="CDD" id="cd14869">
    <property type="entry name" value="uS7_Bacteria"/>
    <property type="match status" value="1"/>
</dbReference>
<dbReference type="FunFam" id="1.10.455.10:FF:000001">
    <property type="entry name" value="30S ribosomal protein S7"/>
    <property type="match status" value="1"/>
</dbReference>
<dbReference type="Gene3D" id="1.10.455.10">
    <property type="entry name" value="Ribosomal protein S7 domain"/>
    <property type="match status" value="1"/>
</dbReference>
<dbReference type="HAMAP" id="MF_00480_B">
    <property type="entry name" value="Ribosomal_uS7_B"/>
    <property type="match status" value="1"/>
</dbReference>
<dbReference type="InterPro" id="IPR000235">
    <property type="entry name" value="Ribosomal_uS7"/>
</dbReference>
<dbReference type="InterPro" id="IPR005717">
    <property type="entry name" value="Ribosomal_uS7_bac/org-type"/>
</dbReference>
<dbReference type="InterPro" id="IPR020606">
    <property type="entry name" value="Ribosomal_uS7_CS"/>
</dbReference>
<dbReference type="InterPro" id="IPR023798">
    <property type="entry name" value="Ribosomal_uS7_dom"/>
</dbReference>
<dbReference type="InterPro" id="IPR036823">
    <property type="entry name" value="Ribosomal_uS7_dom_sf"/>
</dbReference>
<dbReference type="NCBIfam" id="TIGR01029">
    <property type="entry name" value="rpsG_bact"/>
    <property type="match status" value="1"/>
</dbReference>
<dbReference type="PANTHER" id="PTHR11205">
    <property type="entry name" value="RIBOSOMAL PROTEIN S7"/>
    <property type="match status" value="1"/>
</dbReference>
<dbReference type="Pfam" id="PF00177">
    <property type="entry name" value="Ribosomal_S7"/>
    <property type="match status" value="1"/>
</dbReference>
<dbReference type="PIRSF" id="PIRSF002122">
    <property type="entry name" value="RPS7p_RPS7a_RPS5e_RPS7o"/>
    <property type="match status" value="1"/>
</dbReference>
<dbReference type="SUPFAM" id="SSF47973">
    <property type="entry name" value="Ribosomal protein S7"/>
    <property type="match status" value="1"/>
</dbReference>
<dbReference type="PROSITE" id="PS00052">
    <property type="entry name" value="RIBOSOMAL_S7"/>
    <property type="match status" value="1"/>
</dbReference>
<proteinExistence type="inferred from homology"/>
<organism>
    <name type="scientific">Opitutus terrae (strain DSM 11246 / JCM 15787 / PB90-1)</name>
    <dbReference type="NCBI Taxonomy" id="452637"/>
    <lineage>
        <taxon>Bacteria</taxon>
        <taxon>Pseudomonadati</taxon>
        <taxon>Verrucomicrobiota</taxon>
        <taxon>Opitutia</taxon>
        <taxon>Opitutales</taxon>
        <taxon>Opitutaceae</taxon>
        <taxon>Opitutus</taxon>
    </lineage>
</organism>
<evidence type="ECO:0000255" key="1">
    <source>
        <dbReference type="HAMAP-Rule" id="MF_00480"/>
    </source>
</evidence>
<evidence type="ECO:0000305" key="2"/>
<keyword id="KW-1185">Reference proteome</keyword>
<keyword id="KW-0687">Ribonucleoprotein</keyword>
<keyword id="KW-0689">Ribosomal protein</keyword>
<keyword id="KW-0694">RNA-binding</keyword>
<keyword id="KW-0699">rRNA-binding</keyword>
<keyword id="KW-0820">tRNA-binding</keyword>
<feature type="chain" id="PRO_1000125977" description="Small ribosomal subunit protein uS7">
    <location>
        <begin position="1"/>
        <end position="157"/>
    </location>
</feature>